<organism>
    <name type="scientific">Shewanella amazonensis (strain ATCC BAA-1098 / SB2B)</name>
    <dbReference type="NCBI Taxonomy" id="326297"/>
    <lineage>
        <taxon>Bacteria</taxon>
        <taxon>Pseudomonadati</taxon>
        <taxon>Pseudomonadota</taxon>
        <taxon>Gammaproteobacteria</taxon>
        <taxon>Alteromonadales</taxon>
        <taxon>Shewanellaceae</taxon>
        <taxon>Shewanella</taxon>
    </lineage>
</organism>
<dbReference type="EMBL" id="CP000507">
    <property type="protein sequence ID" value="ABM01858.1"/>
    <property type="molecule type" value="Genomic_DNA"/>
</dbReference>
<dbReference type="RefSeq" id="WP_011761761.1">
    <property type="nucleotide sequence ID" value="NC_008700.1"/>
</dbReference>
<dbReference type="SMR" id="A1SBV1"/>
<dbReference type="STRING" id="326297.Sama_3655"/>
<dbReference type="KEGG" id="saz:Sama_3655"/>
<dbReference type="eggNOG" id="COG0445">
    <property type="taxonomic scope" value="Bacteria"/>
</dbReference>
<dbReference type="HOGENOM" id="CLU_007831_2_2_6"/>
<dbReference type="OrthoDB" id="9815560at2"/>
<dbReference type="Proteomes" id="UP000009175">
    <property type="component" value="Chromosome"/>
</dbReference>
<dbReference type="GO" id="GO:0005829">
    <property type="term" value="C:cytosol"/>
    <property type="evidence" value="ECO:0007669"/>
    <property type="project" value="TreeGrafter"/>
</dbReference>
<dbReference type="GO" id="GO:0050660">
    <property type="term" value="F:flavin adenine dinucleotide binding"/>
    <property type="evidence" value="ECO:0007669"/>
    <property type="project" value="UniProtKB-UniRule"/>
</dbReference>
<dbReference type="GO" id="GO:0030488">
    <property type="term" value="P:tRNA methylation"/>
    <property type="evidence" value="ECO:0007669"/>
    <property type="project" value="TreeGrafter"/>
</dbReference>
<dbReference type="GO" id="GO:0002098">
    <property type="term" value="P:tRNA wobble uridine modification"/>
    <property type="evidence" value="ECO:0007669"/>
    <property type="project" value="InterPro"/>
</dbReference>
<dbReference type="FunFam" id="1.10.10.1800:FF:000001">
    <property type="entry name" value="tRNA uridine 5-carboxymethylaminomethyl modification enzyme MnmG"/>
    <property type="match status" value="1"/>
</dbReference>
<dbReference type="FunFam" id="1.10.150.570:FF:000001">
    <property type="entry name" value="tRNA uridine 5-carboxymethylaminomethyl modification enzyme MnmG"/>
    <property type="match status" value="1"/>
</dbReference>
<dbReference type="FunFam" id="3.50.50.60:FF:000002">
    <property type="entry name" value="tRNA uridine 5-carboxymethylaminomethyl modification enzyme MnmG"/>
    <property type="match status" value="1"/>
</dbReference>
<dbReference type="FunFam" id="3.50.50.60:FF:000010">
    <property type="entry name" value="tRNA uridine 5-carboxymethylaminomethyl modification enzyme MnmG"/>
    <property type="match status" value="1"/>
</dbReference>
<dbReference type="Gene3D" id="3.50.50.60">
    <property type="entry name" value="FAD/NAD(P)-binding domain"/>
    <property type="match status" value="2"/>
</dbReference>
<dbReference type="Gene3D" id="1.10.150.570">
    <property type="entry name" value="GidA associated domain, C-terminal subdomain"/>
    <property type="match status" value="1"/>
</dbReference>
<dbReference type="Gene3D" id="1.10.10.1800">
    <property type="entry name" value="tRNA uridine 5-carboxymethylaminomethyl modification enzyme MnmG/GidA"/>
    <property type="match status" value="1"/>
</dbReference>
<dbReference type="HAMAP" id="MF_00129">
    <property type="entry name" value="MnmG_GidA"/>
    <property type="match status" value="1"/>
</dbReference>
<dbReference type="InterPro" id="IPR036188">
    <property type="entry name" value="FAD/NAD-bd_sf"/>
</dbReference>
<dbReference type="InterPro" id="IPR049312">
    <property type="entry name" value="GIDA_C_N"/>
</dbReference>
<dbReference type="InterPro" id="IPR004416">
    <property type="entry name" value="MnmG"/>
</dbReference>
<dbReference type="InterPro" id="IPR002218">
    <property type="entry name" value="MnmG-rel"/>
</dbReference>
<dbReference type="InterPro" id="IPR020595">
    <property type="entry name" value="MnmG-rel_CS"/>
</dbReference>
<dbReference type="InterPro" id="IPR026904">
    <property type="entry name" value="MnmG_C"/>
</dbReference>
<dbReference type="InterPro" id="IPR047001">
    <property type="entry name" value="MnmG_C_subdom"/>
</dbReference>
<dbReference type="InterPro" id="IPR044920">
    <property type="entry name" value="MnmG_C_subdom_sf"/>
</dbReference>
<dbReference type="InterPro" id="IPR040131">
    <property type="entry name" value="MnmG_N"/>
</dbReference>
<dbReference type="NCBIfam" id="TIGR00136">
    <property type="entry name" value="mnmG_gidA"/>
    <property type="match status" value="1"/>
</dbReference>
<dbReference type="PANTHER" id="PTHR11806">
    <property type="entry name" value="GLUCOSE INHIBITED DIVISION PROTEIN A"/>
    <property type="match status" value="1"/>
</dbReference>
<dbReference type="PANTHER" id="PTHR11806:SF0">
    <property type="entry name" value="PROTEIN MTO1 HOMOLOG, MITOCHONDRIAL"/>
    <property type="match status" value="1"/>
</dbReference>
<dbReference type="Pfam" id="PF01134">
    <property type="entry name" value="GIDA"/>
    <property type="match status" value="1"/>
</dbReference>
<dbReference type="Pfam" id="PF21680">
    <property type="entry name" value="GIDA_C_1st"/>
    <property type="match status" value="1"/>
</dbReference>
<dbReference type="Pfam" id="PF13932">
    <property type="entry name" value="SAM_GIDA_C"/>
    <property type="match status" value="1"/>
</dbReference>
<dbReference type="PRINTS" id="PR00368">
    <property type="entry name" value="FADPNR"/>
</dbReference>
<dbReference type="SMART" id="SM01228">
    <property type="entry name" value="GIDA_assoc_3"/>
    <property type="match status" value="1"/>
</dbReference>
<dbReference type="SUPFAM" id="SSF51905">
    <property type="entry name" value="FAD/NAD(P)-binding domain"/>
    <property type="match status" value="1"/>
</dbReference>
<dbReference type="PROSITE" id="PS01280">
    <property type="entry name" value="GIDA_1"/>
    <property type="match status" value="1"/>
</dbReference>
<dbReference type="PROSITE" id="PS01281">
    <property type="entry name" value="GIDA_2"/>
    <property type="match status" value="1"/>
</dbReference>
<feature type="chain" id="PRO_1000016668" description="tRNA uridine 5-carboxymethylaminomethyl modification enzyme MnmG">
    <location>
        <begin position="1"/>
        <end position="629"/>
    </location>
</feature>
<feature type="binding site" evidence="1">
    <location>
        <begin position="13"/>
        <end position="18"/>
    </location>
    <ligand>
        <name>FAD</name>
        <dbReference type="ChEBI" id="CHEBI:57692"/>
    </ligand>
</feature>
<feature type="binding site" evidence="1">
    <location>
        <begin position="273"/>
        <end position="287"/>
    </location>
    <ligand>
        <name>NAD(+)</name>
        <dbReference type="ChEBI" id="CHEBI:57540"/>
    </ligand>
</feature>
<protein>
    <recommendedName>
        <fullName evidence="1">tRNA uridine 5-carboxymethylaminomethyl modification enzyme MnmG</fullName>
    </recommendedName>
    <alternativeName>
        <fullName evidence="1">Glucose-inhibited division protein A</fullName>
    </alternativeName>
</protein>
<comment type="function">
    <text evidence="1">NAD-binding protein involved in the addition of a carboxymethylaminomethyl (cmnm) group at the wobble position (U34) of certain tRNAs, forming tRNA-cmnm(5)s(2)U34.</text>
</comment>
<comment type="cofactor">
    <cofactor evidence="1">
        <name>FAD</name>
        <dbReference type="ChEBI" id="CHEBI:57692"/>
    </cofactor>
</comment>
<comment type="subunit">
    <text evidence="1">Homodimer. Heterotetramer of two MnmE and two MnmG subunits.</text>
</comment>
<comment type="subcellular location">
    <subcellularLocation>
        <location evidence="1">Cytoplasm</location>
    </subcellularLocation>
</comment>
<comment type="similarity">
    <text evidence="1">Belongs to the MnmG family.</text>
</comment>
<reference key="1">
    <citation type="submission" date="2006-12" db="EMBL/GenBank/DDBJ databases">
        <title>Complete sequence of Shewanella amazonensis SB2B.</title>
        <authorList>
            <consortium name="US DOE Joint Genome Institute"/>
            <person name="Copeland A."/>
            <person name="Lucas S."/>
            <person name="Lapidus A."/>
            <person name="Barry K."/>
            <person name="Detter J.C."/>
            <person name="Glavina del Rio T."/>
            <person name="Hammon N."/>
            <person name="Israni S."/>
            <person name="Dalin E."/>
            <person name="Tice H."/>
            <person name="Pitluck S."/>
            <person name="Munk A.C."/>
            <person name="Brettin T."/>
            <person name="Bruce D."/>
            <person name="Han C."/>
            <person name="Tapia R."/>
            <person name="Gilna P."/>
            <person name="Schmutz J."/>
            <person name="Larimer F."/>
            <person name="Land M."/>
            <person name="Hauser L."/>
            <person name="Kyrpides N."/>
            <person name="Mikhailova N."/>
            <person name="Fredrickson J."/>
            <person name="Richardson P."/>
        </authorList>
    </citation>
    <scope>NUCLEOTIDE SEQUENCE [LARGE SCALE GENOMIC DNA]</scope>
    <source>
        <strain>ATCC BAA-1098 / SB2B</strain>
    </source>
</reference>
<keyword id="KW-0963">Cytoplasm</keyword>
<keyword id="KW-0274">FAD</keyword>
<keyword id="KW-0285">Flavoprotein</keyword>
<keyword id="KW-0520">NAD</keyword>
<keyword id="KW-1185">Reference proteome</keyword>
<keyword id="KW-0819">tRNA processing</keyword>
<accession>A1SBV1</accession>
<proteinExistence type="inferred from homology"/>
<name>MNMG_SHEAM</name>
<gene>
    <name evidence="1" type="primary">mnmG</name>
    <name evidence="1" type="synonym">gidA</name>
    <name type="ordered locus">Sama_3655</name>
</gene>
<sequence>MQFHERFDVIVVGGGHAGTEAALAAARMGCKTLLLTHNVDTLGQMSCNPAIGGIGKGHLVKEIDALGGAMAIATDFSGIQFRTLNSSKGPAVRATRAQADRALYKAKILNILQHQPNLRIFQQAVDDLVVENGRVIGAVTQMGLAFEAPAVVLTAGTFLGGKIHIGLENYSGGRAGDQPAIALAHRLRDLPLRVGRLKTGTPPRIDARTIDFSVMTEQKGDTPLPVMSFIGDLSQHPEQISCYITHTNEQTHDIIRGGLDRSPMYSGVIEGIGPRYCPSIEDKIHRFADKNSHQIFIEPEGLTTTEIYPNGISTSLPFDVQIQLVRSIRGMEQAEIVRPGYAIEYDYFDPRDLKNSLETKVIDGLFFAGQINGTTGYEEAGAQGLLAGLNAALQVQGKEAWAPRRDQAYLGVLVDDLSTLGTKEPYRMFTSRAEYRLLLREDNADLRLTEKGRELGLVDDFRWQKFSEKRESIELEQQRLRGQWVHVNSPQVAELNEVLSAPLTREASLEDLLRRPEIEYDTLMKVDGFGPGLADPLAAEQVQIQVKYAGYIQRQQDEIAKAERNENTRLPLDLDYSEVPGLSNEVTAKLNAHKPETIGQASRISGVTPAAVSILLVHLKKRGLLRKSA</sequence>
<evidence type="ECO:0000255" key="1">
    <source>
        <dbReference type="HAMAP-Rule" id="MF_00129"/>
    </source>
</evidence>